<feature type="chain" id="PRO_1000130979" description="DNA gyrase inhibitor YacG">
    <location>
        <begin position="1"/>
        <end position="78"/>
    </location>
</feature>
<feature type="binding site" evidence="1">
    <location>
        <position position="7"/>
    </location>
    <ligand>
        <name>Zn(2+)</name>
        <dbReference type="ChEBI" id="CHEBI:29105"/>
    </ligand>
</feature>
<feature type="binding site" evidence="1">
    <location>
        <position position="10"/>
    </location>
    <ligand>
        <name>Zn(2+)</name>
        <dbReference type="ChEBI" id="CHEBI:29105"/>
    </ligand>
</feature>
<feature type="binding site" evidence="1">
    <location>
        <position position="26"/>
    </location>
    <ligand>
        <name>Zn(2+)</name>
        <dbReference type="ChEBI" id="CHEBI:29105"/>
    </ligand>
</feature>
<feature type="binding site" evidence="1">
    <location>
        <position position="30"/>
    </location>
    <ligand>
        <name>Zn(2+)</name>
        <dbReference type="ChEBI" id="CHEBI:29105"/>
    </ligand>
</feature>
<sequence length="78" mass="8957">MPLTVKCPTCQTEVTWDETSKFKPFCSDRCKLIDLGDWAAEKNAIPVKPEFDPEMLDQLGYDEADFFMDDGSMDDKKQ</sequence>
<proteinExistence type="inferred from homology"/>
<dbReference type="EMBL" id="CP000472">
    <property type="protein sequence ID" value="ACJ31397.1"/>
    <property type="molecule type" value="Genomic_DNA"/>
</dbReference>
<dbReference type="RefSeq" id="WP_020914727.1">
    <property type="nucleotide sequence ID" value="NC_011566.1"/>
</dbReference>
<dbReference type="SMR" id="B8CUS1"/>
<dbReference type="STRING" id="225849.swp_4766"/>
<dbReference type="KEGG" id="swp:swp_4766"/>
<dbReference type="eggNOG" id="COG3024">
    <property type="taxonomic scope" value="Bacteria"/>
</dbReference>
<dbReference type="HOGENOM" id="CLU_178280_1_0_6"/>
<dbReference type="OrthoDB" id="9809663at2"/>
<dbReference type="Proteomes" id="UP000000753">
    <property type="component" value="Chromosome"/>
</dbReference>
<dbReference type="GO" id="GO:0008657">
    <property type="term" value="F:DNA topoisomerase type II (double strand cut, ATP-hydrolyzing) inhibitor activity"/>
    <property type="evidence" value="ECO:0007669"/>
    <property type="project" value="UniProtKB-UniRule"/>
</dbReference>
<dbReference type="GO" id="GO:0008270">
    <property type="term" value="F:zinc ion binding"/>
    <property type="evidence" value="ECO:0007669"/>
    <property type="project" value="UniProtKB-UniRule"/>
</dbReference>
<dbReference type="GO" id="GO:0006355">
    <property type="term" value="P:regulation of DNA-templated transcription"/>
    <property type="evidence" value="ECO:0007669"/>
    <property type="project" value="InterPro"/>
</dbReference>
<dbReference type="Gene3D" id="3.30.50.10">
    <property type="entry name" value="Erythroid Transcription Factor GATA-1, subunit A"/>
    <property type="match status" value="1"/>
</dbReference>
<dbReference type="HAMAP" id="MF_00649">
    <property type="entry name" value="DNA_gyrase_inhibitor_YacG"/>
    <property type="match status" value="1"/>
</dbReference>
<dbReference type="InterPro" id="IPR005584">
    <property type="entry name" value="DNA_gyrase_inhibitor_YacG"/>
</dbReference>
<dbReference type="InterPro" id="IPR013088">
    <property type="entry name" value="Znf_NHR/GATA"/>
</dbReference>
<dbReference type="NCBIfam" id="NF001638">
    <property type="entry name" value="PRK00418.1"/>
    <property type="match status" value="1"/>
</dbReference>
<dbReference type="PANTHER" id="PTHR36150">
    <property type="entry name" value="DNA GYRASE INHIBITOR YACG"/>
    <property type="match status" value="1"/>
</dbReference>
<dbReference type="PANTHER" id="PTHR36150:SF1">
    <property type="entry name" value="DNA GYRASE INHIBITOR YACG"/>
    <property type="match status" value="1"/>
</dbReference>
<dbReference type="Pfam" id="PF03884">
    <property type="entry name" value="YacG"/>
    <property type="match status" value="1"/>
</dbReference>
<dbReference type="SUPFAM" id="SSF57716">
    <property type="entry name" value="Glucocorticoid receptor-like (DNA-binding domain)"/>
    <property type="match status" value="1"/>
</dbReference>
<accession>B8CUS1</accession>
<name>YACG_SHEPW</name>
<evidence type="ECO:0000255" key="1">
    <source>
        <dbReference type="HAMAP-Rule" id="MF_00649"/>
    </source>
</evidence>
<organism>
    <name type="scientific">Shewanella piezotolerans (strain WP3 / JCM 13877)</name>
    <dbReference type="NCBI Taxonomy" id="225849"/>
    <lineage>
        <taxon>Bacteria</taxon>
        <taxon>Pseudomonadati</taxon>
        <taxon>Pseudomonadota</taxon>
        <taxon>Gammaproteobacteria</taxon>
        <taxon>Alteromonadales</taxon>
        <taxon>Shewanellaceae</taxon>
        <taxon>Shewanella</taxon>
    </lineage>
</organism>
<keyword id="KW-0479">Metal-binding</keyword>
<keyword id="KW-0862">Zinc</keyword>
<reference key="1">
    <citation type="journal article" date="2008" name="PLoS ONE">
        <title>Environmental adaptation: genomic analysis of the piezotolerant and psychrotolerant deep-sea iron reducing bacterium Shewanella piezotolerans WP3.</title>
        <authorList>
            <person name="Wang F."/>
            <person name="Wang J."/>
            <person name="Jian H."/>
            <person name="Zhang B."/>
            <person name="Li S."/>
            <person name="Wang F."/>
            <person name="Zeng X."/>
            <person name="Gao L."/>
            <person name="Bartlett D.H."/>
            <person name="Yu J."/>
            <person name="Hu S."/>
            <person name="Xiao X."/>
        </authorList>
    </citation>
    <scope>NUCLEOTIDE SEQUENCE [LARGE SCALE GENOMIC DNA]</scope>
    <source>
        <strain>WP3 / JCM 13877</strain>
    </source>
</reference>
<comment type="function">
    <text evidence="1">Inhibits all the catalytic activities of DNA gyrase by preventing its interaction with DNA. Acts by binding directly to the C-terminal domain of GyrB, which probably disrupts DNA binding by the gyrase.</text>
</comment>
<comment type="cofactor">
    <cofactor evidence="1">
        <name>Zn(2+)</name>
        <dbReference type="ChEBI" id="CHEBI:29105"/>
    </cofactor>
    <text evidence="1">Binds 1 zinc ion.</text>
</comment>
<comment type="subunit">
    <text evidence="1">Interacts with GyrB.</text>
</comment>
<comment type="similarity">
    <text evidence="1">Belongs to the DNA gyrase inhibitor YacG family.</text>
</comment>
<gene>
    <name evidence="1" type="primary">yacG</name>
    <name type="ordered locus">swp_4766</name>
</gene>
<protein>
    <recommendedName>
        <fullName evidence="1">DNA gyrase inhibitor YacG</fullName>
    </recommendedName>
</protein>